<sequence length="137" mass="15648">MRNSDLAPLYRSAIGFDRLFNLLESGQNQSNGGYPPYNVELVDENNYRIAIAVAGFAEQELEITTQDNLLIVRGSHANEPAQRTYLYQGIAERNFERKFQLAEHIKIKGANLVNGLLYIDLERLVPESLKPRRIEIK</sequence>
<feature type="chain" id="PRO_1000022028" description="Small heat shock protein IbpA">
    <location>
        <begin position="1"/>
        <end position="137"/>
    </location>
</feature>
<feature type="domain" description="sHSP" evidence="2">
    <location>
        <begin position="28"/>
        <end position="137"/>
    </location>
</feature>
<evidence type="ECO:0000255" key="1">
    <source>
        <dbReference type="HAMAP-Rule" id="MF_02000"/>
    </source>
</evidence>
<evidence type="ECO:0000255" key="2">
    <source>
        <dbReference type="PROSITE-ProRule" id="PRU00285"/>
    </source>
</evidence>
<dbReference type="EMBL" id="CP000305">
    <property type="protein sequence ID" value="ABG20056.1"/>
    <property type="molecule type" value="Genomic_DNA"/>
</dbReference>
<dbReference type="EMBL" id="ACNQ01000019">
    <property type="protein sequence ID" value="EEO74638.1"/>
    <property type="molecule type" value="Genomic_DNA"/>
</dbReference>
<dbReference type="RefSeq" id="WP_002209636.1">
    <property type="nucleotide sequence ID" value="NZ_ACNQ01000019.1"/>
</dbReference>
<dbReference type="SMR" id="Q1CD74"/>
<dbReference type="GeneID" id="96663430"/>
<dbReference type="KEGG" id="ypn:YPN_3729"/>
<dbReference type="HOGENOM" id="CLU_046737_4_2_6"/>
<dbReference type="Proteomes" id="UP000008936">
    <property type="component" value="Chromosome"/>
</dbReference>
<dbReference type="GO" id="GO:0005737">
    <property type="term" value="C:cytoplasm"/>
    <property type="evidence" value="ECO:0007669"/>
    <property type="project" value="UniProtKB-SubCell"/>
</dbReference>
<dbReference type="GO" id="GO:0050821">
    <property type="term" value="P:protein stabilization"/>
    <property type="evidence" value="ECO:0007669"/>
    <property type="project" value="UniProtKB-UniRule"/>
</dbReference>
<dbReference type="CDD" id="cd06470">
    <property type="entry name" value="ACD_IbpA-B_like"/>
    <property type="match status" value="1"/>
</dbReference>
<dbReference type="FunFam" id="2.60.40.790:FF:000002">
    <property type="entry name" value="Small heat shock protein IbpA"/>
    <property type="match status" value="1"/>
</dbReference>
<dbReference type="Gene3D" id="2.60.40.790">
    <property type="match status" value="1"/>
</dbReference>
<dbReference type="HAMAP" id="MF_02000">
    <property type="entry name" value="HSP20_IbpA"/>
    <property type="match status" value="1"/>
</dbReference>
<dbReference type="InterPro" id="IPR002068">
    <property type="entry name" value="A-crystallin/Hsp20_dom"/>
</dbReference>
<dbReference type="InterPro" id="IPR037913">
    <property type="entry name" value="ACD_IbpA/B"/>
</dbReference>
<dbReference type="InterPro" id="IPR008978">
    <property type="entry name" value="HSP20-like_chaperone"/>
</dbReference>
<dbReference type="InterPro" id="IPR023728">
    <property type="entry name" value="HSP20_IbpA"/>
</dbReference>
<dbReference type="NCBIfam" id="NF008013">
    <property type="entry name" value="PRK10743.1"/>
    <property type="match status" value="1"/>
</dbReference>
<dbReference type="PANTHER" id="PTHR47062">
    <property type="match status" value="1"/>
</dbReference>
<dbReference type="PANTHER" id="PTHR47062:SF1">
    <property type="entry name" value="SMALL HEAT SHOCK PROTEIN IBPA"/>
    <property type="match status" value="1"/>
</dbReference>
<dbReference type="Pfam" id="PF00011">
    <property type="entry name" value="HSP20"/>
    <property type="match status" value="1"/>
</dbReference>
<dbReference type="SUPFAM" id="SSF49764">
    <property type="entry name" value="HSP20-like chaperones"/>
    <property type="match status" value="1"/>
</dbReference>
<dbReference type="PROSITE" id="PS01031">
    <property type="entry name" value="SHSP"/>
    <property type="match status" value="1"/>
</dbReference>
<comment type="function">
    <text evidence="1">Associates with aggregated proteins, together with IbpB, to stabilize and protect them from irreversible denaturation and extensive proteolysis during heat shock and oxidative stress. Aggregated proteins bound to the IbpAB complex are more efficiently refolded and reactivated by the ATP-dependent chaperone systems ClpB and DnaK/DnaJ/GrpE. Its activity is ATP-independent.</text>
</comment>
<comment type="subunit">
    <text evidence="1">Monomer. Forms homomultimers of about 100-150 subunits at optimal growth temperatures. Conformation changes to monomers at high temperatures or high ionic concentrations.</text>
</comment>
<comment type="subcellular location">
    <subcellularLocation>
        <location evidence="1">Cytoplasm</location>
    </subcellularLocation>
</comment>
<comment type="similarity">
    <text evidence="1 2">Belongs to the small heat shock protein (HSP20) family.</text>
</comment>
<accession>Q1CD74</accession>
<accession>D1Q285</accession>
<proteinExistence type="inferred from homology"/>
<organism>
    <name type="scientific">Yersinia pestis bv. Antiqua (strain Nepal516)</name>
    <dbReference type="NCBI Taxonomy" id="377628"/>
    <lineage>
        <taxon>Bacteria</taxon>
        <taxon>Pseudomonadati</taxon>
        <taxon>Pseudomonadota</taxon>
        <taxon>Gammaproteobacteria</taxon>
        <taxon>Enterobacterales</taxon>
        <taxon>Yersiniaceae</taxon>
        <taxon>Yersinia</taxon>
    </lineage>
</organism>
<protein>
    <recommendedName>
        <fullName evidence="1">Small heat shock protein IbpA</fullName>
    </recommendedName>
    <alternativeName>
        <fullName evidence="1">16 kDa heat shock protein A</fullName>
    </alternativeName>
</protein>
<gene>
    <name evidence="1" type="primary">ibpA</name>
    <name type="ordered locus">YPN_3729</name>
    <name type="ORF">YP516_4241</name>
</gene>
<reference key="1">
    <citation type="journal article" date="2006" name="J. Bacteriol.">
        <title>Complete genome sequence of Yersinia pestis strains Antiqua and Nepal516: evidence of gene reduction in an emerging pathogen.</title>
        <authorList>
            <person name="Chain P.S.G."/>
            <person name="Hu P."/>
            <person name="Malfatti S.A."/>
            <person name="Radnedge L."/>
            <person name="Larimer F."/>
            <person name="Vergez L.M."/>
            <person name="Worsham P."/>
            <person name="Chu M.C."/>
            <person name="Andersen G.L."/>
        </authorList>
    </citation>
    <scope>NUCLEOTIDE SEQUENCE [LARGE SCALE GENOMIC DNA]</scope>
    <source>
        <strain>Nepal516</strain>
    </source>
</reference>
<reference key="2">
    <citation type="submission" date="2009-04" db="EMBL/GenBank/DDBJ databases">
        <title>Yersinia pestis Nepal516A whole genome shotgun sequencing project.</title>
        <authorList>
            <person name="Plunkett G. III"/>
            <person name="Anderson B.D."/>
            <person name="Baumler D.J."/>
            <person name="Burland V."/>
            <person name="Cabot E.L."/>
            <person name="Glasner J.D."/>
            <person name="Mau B."/>
            <person name="Neeno-Eckwall E."/>
            <person name="Perna N.T."/>
            <person name="Munk A.C."/>
            <person name="Tapia R."/>
            <person name="Green L.D."/>
            <person name="Rogers Y.C."/>
            <person name="Detter J.C."/>
            <person name="Bruce D.C."/>
            <person name="Brettin T.S."/>
        </authorList>
    </citation>
    <scope>NUCLEOTIDE SEQUENCE [LARGE SCALE GENOMIC DNA]</scope>
    <source>
        <strain>Nepal516</strain>
    </source>
</reference>
<keyword id="KW-0143">Chaperone</keyword>
<keyword id="KW-0963">Cytoplasm</keyword>
<keyword id="KW-0346">Stress response</keyword>
<name>IBPA_YERPN</name>